<comment type="function">
    <text evidence="6 8 9">Receptor for SEMA5A that plays a role in axon guidance, invasive growth and cell migration. Stimulates neurite outgrowth and mediates Ca(2+)/Mg(2+)-dependent cell aggregation. In glioma cells, SEMA5A stimulation of PLXNB3 results in the disassembly of F-actin stress fibers, disruption of focal adhesions and cellular collapse as well as inhibition of cell migration and invasion through ARHGDIA-mediated inactivation of RAC1.</text>
</comment>
<comment type="subunit">
    <text evidence="1 5 7 9">Interacts (via cytoplasmic domain) with RAC1 and ARHGDIA (By similarity). Binds MET and MST1R. Interacts (via cytoplasmic domain) with FSCN1. Interacts with RIT2/RIN. May form homodimers (via Sema domain).</text>
</comment>
<comment type="interaction">
    <interactant intactId="EBI-311073">
        <id>Q9ULL4</id>
    </interactant>
    <interactant intactId="EBI-351076">
        <id>Q16658</id>
        <label>FSCN1</label>
    </interactant>
    <organismsDiffer>false</organismsDiffer>
    <experiments>2</experiments>
</comment>
<comment type="interaction">
    <interactant intactId="EBI-311073">
        <id>Q9ULL4</id>
    </interactant>
    <interactant intactId="EBI-1039152">
        <id>P08581</id>
        <label>MET</label>
    </interactant>
    <organismsDiffer>false</organismsDiffer>
    <experiments>2</experiments>
</comment>
<comment type="interaction">
    <interactant intactId="EBI-311073">
        <id>Q9ULL4</id>
    </interactant>
    <interactant intactId="EBI-2637518">
        <id>Q04912</id>
        <label>MST1R</label>
    </interactant>
    <organismsDiffer>false</organismsDiffer>
    <experiments>2</experiments>
</comment>
<comment type="subcellular location">
    <subcellularLocation>
        <location evidence="6 7">Cell membrane</location>
        <topology evidence="6 7">Single-pass type I membrane protein</topology>
    </subcellularLocation>
    <text>Colocalizes with RIT2/RIN at the plasma membrane.</text>
</comment>
<comment type="alternative products">
    <event type="alternative splicing"/>
    <isoform>
        <id>Q9ULL4-1</id>
        <name>1</name>
        <sequence type="displayed"/>
    </isoform>
    <isoform>
        <id>Q9ULL4-2</id>
        <name>2</name>
        <sequence type="described" ref="VSP_044467"/>
    </isoform>
</comment>
<comment type="tissue specificity">
    <text evidence="7 8 9">Expression detected in Purkinje and granular cells in cerebellum, and in brain neocortex but not in corpus callosum. Expressed in glioma cells and embryonic kidney cells (at protein level). Expressed in brain, liver, pancreas and placenta, with weak expression detected also in lung and kidney. Expressed in several glioma cell lines.</text>
</comment>
<comment type="similarity">
    <text evidence="12">Belongs to the plexin family.</text>
</comment>
<comment type="sequence caution" evidence="12">
    <conflict type="erroneous initiation">
        <sequence resource="EMBL-CDS" id="BAA86520"/>
    </conflict>
    <text>Extended N-terminus.</text>
</comment>
<proteinExistence type="evidence at protein level"/>
<gene>
    <name type="primary">PLXNB3</name>
    <name type="synonym">KIAA1206</name>
    <name type="synonym">PLXN6</name>
</gene>
<sequence length="1909" mass="206847">MCHAAQETPLLHHFMAPVMARWPPFGLCLLLLLLSPPPLPLTGAHRFSAPNTTLNHLALAPGRGTLYVGAVNRLFQLSPELQLEAVAVTGPVIDSPDCVPFRDPAECPQAQLTDNANQLLLVSSRAQELVACGQVRQGVCETRRLGDVAEVLYQAEDPGDGQFVAANTPGVATVGLVVPLPGRDLLLVARGLAGKLSAGVPPLAIRQLAGSQPFSSEGLGRLVVGDFSDYNNSYVGAFADARSAYFVFRRRGARAQAEYRSYVARVCLGDTNLYSYVEVPLACQGQGLIQAAFLAPGTLLGVFAAGPRGTQAALCAFPMVELGASMEQARRLCYTAGGRGPSGAEEATVEYGVTSRCVTLPLDSPESYPCGDEHTPSPIAGRQPLEVQPLLKLGQPVSAVAALQADGHMIAFLGDTQGQLYKVFLHGSQGQVYHSQQVGPPGSAISPDLLLDSSGSHLYVLTAHQVDRIPVAACPQFPDCASCLQAQDPLCGWCVLQGRCTRKGQCGRAGQLNQWLWSYEEDSHCLHIQSLLPGHHPRQEQGQVTLSVPRLPILDADEYFHCAFGDYDSLAHVEGPHVACVTPPQDQVPLNPPGTDHVTVPLALMFEDVTVAATNFSFYDCSAVQALEAAAPCRACVGSIWRCHWCPQSSHCVYGEHCPEGERTIYSAQEVDIQVRGPGACPQVEGLAGPHLVPVGWESHLALRVRNLQHFRGLPASFHCWLELPGELRGLPATLEETAGDSGLIHCQAHQFYPSMSQRELPVPIYVTQGEAQRLDNTHALYVILYDCAMGHPDCSHCQAANRSLGCLWCADGQPACRYGPLCPPGAVELLCPAPSIDAVEPLTGPPEGGLALTILGSNLGRAFADVQYAVSVASRPCNPEPSLYRTSARIVCVTSPAPNGTTGPVRVAIKSQPPGISSQHFTYQDPVLLSLSPRWGPQAGGTQLTIRGQHLQTGGNTSAFVGGQPCPILEPVCPEAIVCRTRPQAAPGEAAVLVVFGHAQRTLLASPFRYTANPQLVAAEPSASFRGGGRLIRVRGTGLDVVQRPLLSVWLEADAEVQASRAQPQDPQPRRSCGAPAADPQACIQLGGGLLQCSTVCSVNSSSLLLCRSPAVPDRAHPQRVFFTLDNVQVDFASASGGQGFLYQPNPRLAPLSREGPARPYRLKPGHVLDVEGEGLNLGISKEEVRVHIGRGECLVKTLTRTHLYCEPPAHAPQPANGSGLPQFVVQMGNVQLALGPVQYEAEPPLSAFPVEAQAGVGMGAAVLIAAVLLLTLMYRHKSKQALRDYQKVLVQLESLETGVGDQCRKEFTDLMTEMTDLSSDLEGSGIPFLDYRTYAERAFFPGHGGCPLQPKPEGPGEDGHCATVRQGLTQLSNLLNSKLFLLTLIHTLEEQPSFSQRDRCHVASLLSLALHGKLEYLTDIMRTLLGDLAAHYVHRNPKLMLRRTETMVEKLLTNWLSICLYAFLREVAGEPLYMLFRAIQYQVDKGPVDAVTGKAKRTLNDSRLLREDVEFQPLTLMVLVGPGAGGAAGSSEMQRVPARVLDTDTITQVKEKVLDQVYKGTPFSQRPSVHALDLEWRSGLAGHLTLSDEDLTSVTQNHWKRLNTLQHYKVPDGATVGLVPQLHRGSTISQSLAQRCPLGENIPTLEDGEEGGVCLWHLVKATEEPEGAKVRCSSLREREPARAKAIPEIYLTRLLSMKGTLQKFVDDTFQAILSVNRPIPIAVKYLFDLLDELAEKHGIEDPGTLHIWKTNSLLLRFWVNALKNPQLIFDVRVSDNVDAILAVIAQTFIDSCTTSEHKVGRDSPVNKLLYAREIPRYKQMVERYYADIRQSSPASYQEMNSALAELSGNYTSAPHCLEALQELYNHIHRYYDQIISALEEDPVGQKLQLACRLQQVAALVENKVTDL</sequence>
<protein>
    <recommendedName>
        <fullName>Plexin-B3</fullName>
    </recommendedName>
</protein>
<reference key="1">
    <citation type="submission" date="1999-05" db="EMBL/GenBank/DDBJ databases">
        <title>Cloning and characterization of the new human plexin family member, plexin related protein.</title>
        <authorList>
            <person name="Veske A."/>
            <person name="Michelson P."/>
            <person name="Finckh U."/>
            <person name="Gal A."/>
        </authorList>
    </citation>
    <scope>NUCLEOTIDE SEQUENCE [MRNA] (ISOFORM 1)</scope>
    <source>
        <tissue>Brain</tissue>
    </source>
</reference>
<reference key="2">
    <citation type="journal article" date="1999" name="DNA Res.">
        <title>Prediction of the coding sequences of unidentified human genes. XV. The complete sequences of 100 new cDNA clones from brain which code for large proteins in vitro.</title>
        <authorList>
            <person name="Nagase T."/>
            <person name="Ishikawa K."/>
            <person name="Kikuno R."/>
            <person name="Hirosawa M."/>
            <person name="Nomura N."/>
            <person name="Ohara O."/>
        </authorList>
    </citation>
    <scope>NUCLEOTIDE SEQUENCE [LARGE SCALE MRNA] (ISOFORM 1)</scope>
    <source>
        <tissue>Brain</tissue>
    </source>
</reference>
<reference key="3">
    <citation type="journal article" date="2004" name="Nat. Genet.">
        <title>Complete sequencing and characterization of 21,243 full-length human cDNAs.</title>
        <authorList>
            <person name="Ota T."/>
            <person name="Suzuki Y."/>
            <person name="Nishikawa T."/>
            <person name="Otsuki T."/>
            <person name="Sugiyama T."/>
            <person name="Irie R."/>
            <person name="Wakamatsu A."/>
            <person name="Hayashi K."/>
            <person name="Sato H."/>
            <person name="Nagai K."/>
            <person name="Kimura K."/>
            <person name="Makita H."/>
            <person name="Sekine M."/>
            <person name="Obayashi M."/>
            <person name="Nishi T."/>
            <person name="Shibahara T."/>
            <person name="Tanaka T."/>
            <person name="Ishii S."/>
            <person name="Yamamoto J."/>
            <person name="Saito K."/>
            <person name="Kawai Y."/>
            <person name="Isono Y."/>
            <person name="Nakamura Y."/>
            <person name="Nagahari K."/>
            <person name="Murakami K."/>
            <person name="Yasuda T."/>
            <person name="Iwayanagi T."/>
            <person name="Wagatsuma M."/>
            <person name="Shiratori A."/>
            <person name="Sudo H."/>
            <person name="Hosoiri T."/>
            <person name="Kaku Y."/>
            <person name="Kodaira H."/>
            <person name="Kondo H."/>
            <person name="Sugawara M."/>
            <person name="Takahashi M."/>
            <person name="Kanda K."/>
            <person name="Yokoi T."/>
            <person name="Furuya T."/>
            <person name="Kikkawa E."/>
            <person name="Omura Y."/>
            <person name="Abe K."/>
            <person name="Kamihara K."/>
            <person name="Katsuta N."/>
            <person name="Sato K."/>
            <person name="Tanikawa M."/>
            <person name="Yamazaki M."/>
            <person name="Ninomiya K."/>
            <person name="Ishibashi T."/>
            <person name="Yamashita H."/>
            <person name="Murakawa K."/>
            <person name="Fujimori K."/>
            <person name="Tanai H."/>
            <person name="Kimata M."/>
            <person name="Watanabe M."/>
            <person name="Hiraoka S."/>
            <person name="Chiba Y."/>
            <person name="Ishida S."/>
            <person name="Ono Y."/>
            <person name="Takiguchi S."/>
            <person name="Watanabe S."/>
            <person name="Yosida M."/>
            <person name="Hotuta T."/>
            <person name="Kusano J."/>
            <person name="Kanehori K."/>
            <person name="Takahashi-Fujii A."/>
            <person name="Hara H."/>
            <person name="Tanase T.-O."/>
            <person name="Nomura Y."/>
            <person name="Togiya S."/>
            <person name="Komai F."/>
            <person name="Hara R."/>
            <person name="Takeuchi K."/>
            <person name="Arita M."/>
            <person name="Imose N."/>
            <person name="Musashino K."/>
            <person name="Yuuki H."/>
            <person name="Oshima A."/>
            <person name="Sasaki N."/>
            <person name="Aotsuka S."/>
            <person name="Yoshikawa Y."/>
            <person name="Matsunawa H."/>
            <person name="Ichihara T."/>
            <person name="Shiohata N."/>
            <person name="Sano S."/>
            <person name="Moriya S."/>
            <person name="Momiyama H."/>
            <person name="Satoh N."/>
            <person name="Takami S."/>
            <person name="Terashima Y."/>
            <person name="Suzuki O."/>
            <person name="Nakagawa S."/>
            <person name="Senoh A."/>
            <person name="Mizoguchi H."/>
            <person name="Goto Y."/>
            <person name="Shimizu F."/>
            <person name="Wakebe H."/>
            <person name="Hishigaki H."/>
            <person name="Watanabe T."/>
            <person name="Sugiyama A."/>
            <person name="Takemoto M."/>
            <person name="Kawakami B."/>
            <person name="Yamazaki M."/>
            <person name="Watanabe K."/>
            <person name="Kumagai A."/>
            <person name="Itakura S."/>
            <person name="Fukuzumi Y."/>
            <person name="Fujimori Y."/>
            <person name="Komiyama M."/>
            <person name="Tashiro H."/>
            <person name="Tanigami A."/>
            <person name="Fujiwara T."/>
            <person name="Ono T."/>
            <person name="Yamada K."/>
            <person name="Fujii Y."/>
            <person name="Ozaki K."/>
            <person name="Hirao M."/>
            <person name="Ohmori Y."/>
            <person name="Kawabata A."/>
            <person name="Hikiji T."/>
            <person name="Kobatake N."/>
            <person name="Inagaki H."/>
            <person name="Ikema Y."/>
            <person name="Okamoto S."/>
            <person name="Okitani R."/>
            <person name="Kawakami T."/>
            <person name="Noguchi S."/>
            <person name="Itoh T."/>
            <person name="Shigeta K."/>
            <person name="Senba T."/>
            <person name="Matsumura K."/>
            <person name="Nakajima Y."/>
            <person name="Mizuno T."/>
            <person name="Morinaga M."/>
            <person name="Sasaki M."/>
            <person name="Togashi T."/>
            <person name="Oyama M."/>
            <person name="Hata H."/>
            <person name="Watanabe M."/>
            <person name="Komatsu T."/>
            <person name="Mizushima-Sugano J."/>
            <person name="Satoh T."/>
            <person name="Shirai Y."/>
            <person name="Takahashi Y."/>
            <person name="Nakagawa K."/>
            <person name="Okumura K."/>
            <person name="Nagase T."/>
            <person name="Nomura N."/>
            <person name="Kikuchi H."/>
            <person name="Masuho Y."/>
            <person name="Yamashita R."/>
            <person name="Nakai K."/>
            <person name="Yada T."/>
            <person name="Nakamura Y."/>
            <person name="Ohara O."/>
            <person name="Isogai T."/>
            <person name="Sugano S."/>
        </authorList>
    </citation>
    <scope>NUCLEOTIDE SEQUENCE [LARGE SCALE MRNA] (ISOFORM 2)</scope>
    <scope>VARIANTS ILE-598; ASP-1156 AND THR-1535</scope>
    <source>
        <tissue>Hippocampus</tissue>
    </source>
</reference>
<reference key="4">
    <citation type="journal article" date="2005" name="Nature">
        <title>The DNA sequence of the human X chromosome.</title>
        <authorList>
            <person name="Ross M.T."/>
            <person name="Grafham D.V."/>
            <person name="Coffey A.J."/>
            <person name="Scherer S."/>
            <person name="McLay K."/>
            <person name="Muzny D."/>
            <person name="Platzer M."/>
            <person name="Howell G.R."/>
            <person name="Burrows C."/>
            <person name="Bird C.P."/>
            <person name="Frankish A."/>
            <person name="Lovell F.L."/>
            <person name="Howe K.L."/>
            <person name="Ashurst J.L."/>
            <person name="Fulton R.S."/>
            <person name="Sudbrak R."/>
            <person name="Wen G."/>
            <person name="Jones M.C."/>
            <person name="Hurles M.E."/>
            <person name="Andrews T.D."/>
            <person name="Scott C.E."/>
            <person name="Searle S."/>
            <person name="Ramser J."/>
            <person name="Whittaker A."/>
            <person name="Deadman R."/>
            <person name="Carter N.P."/>
            <person name="Hunt S.E."/>
            <person name="Chen R."/>
            <person name="Cree A."/>
            <person name="Gunaratne P."/>
            <person name="Havlak P."/>
            <person name="Hodgson A."/>
            <person name="Metzker M.L."/>
            <person name="Richards S."/>
            <person name="Scott G."/>
            <person name="Steffen D."/>
            <person name="Sodergren E."/>
            <person name="Wheeler D.A."/>
            <person name="Worley K.C."/>
            <person name="Ainscough R."/>
            <person name="Ambrose K.D."/>
            <person name="Ansari-Lari M.A."/>
            <person name="Aradhya S."/>
            <person name="Ashwell R.I."/>
            <person name="Babbage A.K."/>
            <person name="Bagguley C.L."/>
            <person name="Ballabio A."/>
            <person name="Banerjee R."/>
            <person name="Barker G.E."/>
            <person name="Barlow K.F."/>
            <person name="Barrett I.P."/>
            <person name="Bates K.N."/>
            <person name="Beare D.M."/>
            <person name="Beasley H."/>
            <person name="Beasley O."/>
            <person name="Beck A."/>
            <person name="Bethel G."/>
            <person name="Blechschmidt K."/>
            <person name="Brady N."/>
            <person name="Bray-Allen S."/>
            <person name="Bridgeman A.M."/>
            <person name="Brown A.J."/>
            <person name="Brown M.J."/>
            <person name="Bonnin D."/>
            <person name="Bruford E.A."/>
            <person name="Buhay C."/>
            <person name="Burch P."/>
            <person name="Burford D."/>
            <person name="Burgess J."/>
            <person name="Burrill W."/>
            <person name="Burton J."/>
            <person name="Bye J.M."/>
            <person name="Carder C."/>
            <person name="Carrel L."/>
            <person name="Chako J."/>
            <person name="Chapman J.C."/>
            <person name="Chavez D."/>
            <person name="Chen E."/>
            <person name="Chen G."/>
            <person name="Chen Y."/>
            <person name="Chen Z."/>
            <person name="Chinault C."/>
            <person name="Ciccodicola A."/>
            <person name="Clark S.Y."/>
            <person name="Clarke G."/>
            <person name="Clee C.M."/>
            <person name="Clegg S."/>
            <person name="Clerc-Blankenburg K."/>
            <person name="Clifford K."/>
            <person name="Cobley V."/>
            <person name="Cole C.G."/>
            <person name="Conquer J.S."/>
            <person name="Corby N."/>
            <person name="Connor R.E."/>
            <person name="David R."/>
            <person name="Davies J."/>
            <person name="Davis C."/>
            <person name="Davis J."/>
            <person name="Delgado O."/>
            <person name="Deshazo D."/>
            <person name="Dhami P."/>
            <person name="Ding Y."/>
            <person name="Dinh H."/>
            <person name="Dodsworth S."/>
            <person name="Draper H."/>
            <person name="Dugan-Rocha S."/>
            <person name="Dunham A."/>
            <person name="Dunn M."/>
            <person name="Durbin K.J."/>
            <person name="Dutta I."/>
            <person name="Eades T."/>
            <person name="Ellwood M."/>
            <person name="Emery-Cohen A."/>
            <person name="Errington H."/>
            <person name="Evans K.L."/>
            <person name="Faulkner L."/>
            <person name="Francis F."/>
            <person name="Frankland J."/>
            <person name="Fraser A.E."/>
            <person name="Galgoczy P."/>
            <person name="Gilbert J."/>
            <person name="Gill R."/>
            <person name="Gloeckner G."/>
            <person name="Gregory S.G."/>
            <person name="Gribble S."/>
            <person name="Griffiths C."/>
            <person name="Grocock R."/>
            <person name="Gu Y."/>
            <person name="Gwilliam R."/>
            <person name="Hamilton C."/>
            <person name="Hart E.A."/>
            <person name="Hawes A."/>
            <person name="Heath P.D."/>
            <person name="Heitmann K."/>
            <person name="Hennig S."/>
            <person name="Hernandez J."/>
            <person name="Hinzmann B."/>
            <person name="Ho S."/>
            <person name="Hoffs M."/>
            <person name="Howden P.J."/>
            <person name="Huckle E.J."/>
            <person name="Hume J."/>
            <person name="Hunt P.J."/>
            <person name="Hunt A.R."/>
            <person name="Isherwood J."/>
            <person name="Jacob L."/>
            <person name="Johnson D."/>
            <person name="Jones S."/>
            <person name="de Jong P.J."/>
            <person name="Joseph S.S."/>
            <person name="Keenan S."/>
            <person name="Kelly S."/>
            <person name="Kershaw J.K."/>
            <person name="Khan Z."/>
            <person name="Kioschis P."/>
            <person name="Klages S."/>
            <person name="Knights A.J."/>
            <person name="Kosiura A."/>
            <person name="Kovar-Smith C."/>
            <person name="Laird G.K."/>
            <person name="Langford C."/>
            <person name="Lawlor S."/>
            <person name="Leversha M."/>
            <person name="Lewis L."/>
            <person name="Liu W."/>
            <person name="Lloyd C."/>
            <person name="Lloyd D.M."/>
            <person name="Loulseged H."/>
            <person name="Loveland J.E."/>
            <person name="Lovell J.D."/>
            <person name="Lozado R."/>
            <person name="Lu J."/>
            <person name="Lyne R."/>
            <person name="Ma J."/>
            <person name="Maheshwari M."/>
            <person name="Matthews L.H."/>
            <person name="McDowall J."/>
            <person name="McLaren S."/>
            <person name="McMurray A."/>
            <person name="Meidl P."/>
            <person name="Meitinger T."/>
            <person name="Milne S."/>
            <person name="Miner G."/>
            <person name="Mistry S.L."/>
            <person name="Morgan M."/>
            <person name="Morris S."/>
            <person name="Mueller I."/>
            <person name="Mullikin J.C."/>
            <person name="Nguyen N."/>
            <person name="Nordsiek G."/>
            <person name="Nyakatura G."/>
            <person name="O'dell C.N."/>
            <person name="Okwuonu G."/>
            <person name="Palmer S."/>
            <person name="Pandian R."/>
            <person name="Parker D."/>
            <person name="Parrish J."/>
            <person name="Pasternak S."/>
            <person name="Patel D."/>
            <person name="Pearce A.V."/>
            <person name="Pearson D.M."/>
            <person name="Pelan S.E."/>
            <person name="Perez L."/>
            <person name="Porter K.M."/>
            <person name="Ramsey Y."/>
            <person name="Reichwald K."/>
            <person name="Rhodes S."/>
            <person name="Ridler K.A."/>
            <person name="Schlessinger D."/>
            <person name="Schueler M.G."/>
            <person name="Sehra H.K."/>
            <person name="Shaw-Smith C."/>
            <person name="Shen H."/>
            <person name="Sheridan E.M."/>
            <person name="Shownkeen R."/>
            <person name="Skuce C.D."/>
            <person name="Smith M.L."/>
            <person name="Sotheran E.C."/>
            <person name="Steingruber H.E."/>
            <person name="Steward C.A."/>
            <person name="Storey R."/>
            <person name="Swann R.M."/>
            <person name="Swarbreck D."/>
            <person name="Tabor P.E."/>
            <person name="Taudien S."/>
            <person name="Taylor T."/>
            <person name="Teague B."/>
            <person name="Thomas K."/>
            <person name="Thorpe A."/>
            <person name="Timms K."/>
            <person name="Tracey A."/>
            <person name="Trevanion S."/>
            <person name="Tromans A.C."/>
            <person name="d'Urso M."/>
            <person name="Verduzco D."/>
            <person name="Villasana D."/>
            <person name="Waldron L."/>
            <person name="Wall M."/>
            <person name="Wang Q."/>
            <person name="Warren J."/>
            <person name="Warry G.L."/>
            <person name="Wei X."/>
            <person name="West A."/>
            <person name="Whitehead S.L."/>
            <person name="Whiteley M.N."/>
            <person name="Wilkinson J.E."/>
            <person name="Willey D.L."/>
            <person name="Williams G."/>
            <person name="Williams L."/>
            <person name="Williamson A."/>
            <person name="Williamson H."/>
            <person name="Wilming L."/>
            <person name="Woodmansey R.L."/>
            <person name="Wray P.W."/>
            <person name="Yen J."/>
            <person name="Zhang J."/>
            <person name="Zhou J."/>
            <person name="Zoghbi H."/>
            <person name="Zorilla S."/>
            <person name="Buck D."/>
            <person name="Reinhardt R."/>
            <person name="Poustka A."/>
            <person name="Rosenthal A."/>
            <person name="Lehrach H."/>
            <person name="Meindl A."/>
            <person name="Minx P.J."/>
            <person name="Hillier L.W."/>
            <person name="Willard H.F."/>
            <person name="Wilson R.K."/>
            <person name="Waterston R.H."/>
            <person name="Rice C.M."/>
            <person name="Vaudin M."/>
            <person name="Coulson A."/>
            <person name="Nelson D.L."/>
            <person name="Weinstock G."/>
            <person name="Sulston J.E."/>
            <person name="Durbin R.M."/>
            <person name="Hubbard T."/>
            <person name="Gibbs R.A."/>
            <person name="Beck S."/>
            <person name="Rogers J."/>
            <person name="Bentley D.R."/>
        </authorList>
    </citation>
    <scope>NUCLEOTIDE SEQUENCE [LARGE SCALE GENOMIC DNA]</scope>
</reference>
<reference key="5">
    <citation type="journal article" date="2004" name="Oncogene">
        <title>Interplay between scatter factor receptors and B plexins controls invasive growth.</title>
        <authorList>
            <person name="Conrotto P."/>
            <person name="Corso S."/>
            <person name="Gamberini S."/>
            <person name="Comoglio P.M."/>
            <person name="Giordano S."/>
        </authorList>
    </citation>
    <scope>INTERACTION WITH MET AND MST1R</scope>
</reference>
<reference key="6">
    <citation type="journal article" date="2004" name="EMBO Rep.">
        <title>Plexin-B3 is a functional receptor for semaphorin 5A.</title>
        <authorList>
            <person name="Artigiani S."/>
            <person name="Conrotto P."/>
            <person name="Fazzari P."/>
            <person name="Gilestro G.F."/>
            <person name="Barberis D."/>
            <person name="Giordano S."/>
            <person name="Comoglio P.M."/>
            <person name="Tamagnone L."/>
        </authorList>
    </citation>
    <scope>FUNCTION</scope>
    <scope>SUBCELLULAR LOCATION</scope>
</reference>
<reference key="7">
    <citation type="journal article" date="2005" name="BMC Neurosci.">
        <title>Plexin B3 promotes neurite outgrowth, interacts homophilically, and interacts with Rin.</title>
        <authorList>
            <person name="Hartwig C."/>
            <person name="Veske A."/>
            <person name="Krejcova S."/>
            <person name="Rosenberger G."/>
            <person name="Finckh U."/>
        </authorList>
    </citation>
    <scope>SUBUNIT</scope>
    <scope>SUBCELLULAR LOCATION</scope>
    <scope>TISSUE SPECIFICITY</scope>
</reference>
<reference key="8">
    <citation type="journal article" date="2010" name="J. Biol. Chem.">
        <title>Semaphorin 5A and plexin-B3 inhibit human glioma cell motility through RhoGDIalpha-mediated inactivation of Rac1 GTPase.</title>
        <authorList>
            <person name="Li X."/>
            <person name="Lee A.Y."/>
        </authorList>
    </citation>
    <scope>FUNCTION</scope>
    <scope>TISSUE SPECIFICITY</scope>
</reference>
<reference key="9">
    <citation type="journal article" date="2012" name="Oncogene">
        <title>Semaphorin 5A and plexin-B3 regulate human glioma cell motility and morphology through Rac1 and the actin cytoskeleton.</title>
        <authorList>
            <person name="Li X."/>
            <person name="Law J.W."/>
            <person name="Lee A.Y."/>
        </authorList>
    </citation>
    <scope>FUNCTION</scope>
    <scope>INTERACTION WITH FSCN1</scope>
    <scope>TISSUE SPECIFICITY</scope>
</reference>
<reference key="10">
    <citation type="journal article" date="2017" name="J. Med. Genet.">
        <title>STAG1 mutations cause a novel cohesinopathy characterised by unspecific syndromic intellectual disability.</title>
        <authorList>
            <person name="Lehalle D."/>
            <person name="Mosca-Boidron A.L."/>
            <person name="Begtrup A."/>
            <person name="Boute-Benejean O."/>
            <person name="Charles P."/>
            <person name="Cho M.T."/>
            <person name="Clarkson A."/>
            <person name="Devinsky O."/>
            <person name="Duffourd Y."/>
            <person name="Duplomb-Jego L."/>
            <person name="Gerard B."/>
            <person name="Jacquette A."/>
            <person name="Kuentz P."/>
            <person name="Masurel-Paulet A."/>
            <person name="McDougall C."/>
            <person name="Moutton S."/>
            <person name="Olivie H."/>
            <person name="Park S.M."/>
            <person name="Rauch A."/>
            <person name="Revencu N."/>
            <person name="Riviere J.B."/>
            <person name="Rubin K."/>
            <person name="Simonic I."/>
            <person name="Shears D.J."/>
            <person name="Smol T."/>
            <person name="Taylor Tavares A.L."/>
            <person name="Terhal P."/>
            <person name="Thevenon J."/>
            <person name="Van Gassen K."/>
            <person name="Vincent-Delorme C."/>
            <person name="Willemsen M.H."/>
            <person name="Wilson G.N."/>
            <person name="Zackai E."/>
            <person name="Zweier C."/>
            <person name="Callier P."/>
            <person name="Thauvin-Robinet C."/>
            <person name="Faivre L."/>
        </authorList>
    </citation>
    <scope>VARIANT GLN-550</scope>
</reference>
<dbReference type="EMBL" id="AF149019">
    <property type="protein sequence ID" value="AAG01376.1"/>
    <property type="molecule type" value="mRNA"/>
</dbReference>
<dbReference type="EMBL" id="AB033032">
    <property type="protein sequence ID" value="BAA86520.1"/>
    <property type="status" value="ALT_INIT"/>
    <property type="molecule type" value="mRNA"/>
</dbReference>
<dbReference type="EMBL" id="AK295762">
    <property type="protein sequence ID" value="BAH12182.1"/>
    <property type="molecule type" value="mRNA"/>
</dbReference>
<dbReference type="EMBL" id="U52111">
    <property type="status" value="NOT_ANNOTATED_CDS"/>
    <property type="molecule type" value="Genomic_DNA"/>
</dbReference>
<dbReference type="CCDS" id="CCDS14729.1">
    <molecule id="Q9ULL4-1"/>
</dbReference>
<dbReference type="CCDS" id="CCDS55536.1">
    <molecule id="Q9ULL4-2"/>
</dbReference>
<dbReference type="RefSeq" id="NP_001156729.1">
    <molecule id="Q9ULL4-2"/>
    <property type="nucleotide sequence ID" value="NM_001163257.2"/>
</dbReference>
<dbReference type="RefSeq" id="NP_005384.2">
    <molecule id="Q9ULL4-1"/>
    <property type="nucleotide sequence ID" value="NM_005393.2"/>
</dbReference>
<dbReference type="SMR" id="Q9ULL4"/>
<dbReference type="BioGRID" id="111378">
    <property type="interactions" value="14"/>
</dbReference>
<dbReference type="FunCoup" id="Q9ULL4">
    <property type="interactions" value="31"/>
</dbReference>
<dbReference type="IntAct" id="Q9ULL4">
    <property type="interactions" value="13"/>
</dbReference>
<dbReference type="MINT" id="Q9ULL4"/>
<dbReference type="STRING" id="9606.ENSP00000442736"/>
<dbReference type="GlyConnect" id="1614">
    <property type="glycosylation" value="1 N-Linked glycan (1 site)"/>
</dbReference>
<dbReference type="GlyCosmos" id="Q9ULL4">
    <property type="glycosylation" value="8 sites, 1 glycan"/>
</dbReference>
<dbReference type="GlyGen" id="Q9ULL4">
    <property type="glycosylation" value="9 sites, 3 N-linked glycans (2 sites)"/>
</dbReference>
<dbReference type="iPTMnet" id="Q9ULL4"/>
<dbReference type="PhosphoSitePlus" id="Q9ULL4"/>
<dbReference type="SwissPalm" id="Q9ULL4"/>
<dbReference type="BioMuta" id="PLXNB3"/>
<dbReference type="DMDM" id="51701857"/>
<dbReference type="jPOST" id="Q9ULL4"/>
<dbReference type="MassIVE" id="Q9ULL4"/>
<dbReference type="PaxDb" id="9606-ENSP00000442736"/>
<dbReference type="PeptideAtlas" id="Q9ULL4"/>
<dbReference type="ProteomicsDB" id="27401"/>
<dbReference type="ProteomicsDB" id="85069">
    <molecule id="Q9ULL4-1"/>
</dbReference>
<dbReference type="Antibodypedia" id="369">
    <property type="antibodies" value="97 antibodies from 15 providers"/>
</dbReference>
<dbReference type="DNASU" id="5365"/>
<dbReference type="Ensembl" id="ENST00000361971.10">
    <molecule id="Q9ULL4-1"/>
    <property type="protein sequence ID" value="ENSP00000355378.5"/>
    <property type="gene ID" value="ENSG00000198753.12"/>
</dbReference>
<dbReference type="Ensembl" id="ENST00000538966.5">
    <molecule id="Q9ULL4-2"/>
    <property type="protein sequence ID" value="ENSP00000442736.1"/>
    <property type="gene ID" value="ENSG00000198753.12"/>
</dbReference>
<dbReference type="GeneID" id="5365"/>
<dbReference type="KEGG" id="hsa:5365"/>
<dbReference type="MANE-Select" id="ENST00000361971.10">
    <property type="protein sequence ID" value="ENSP00000355378.5"/>
    <property type="RefSeq nucleotide sequence ID" value="NM_005393.3"/>
    <property type="RefSeq protein sequence ID" value="NP_005384.2"/>
</dbReference>
<dbReference type="UCSC" id="uc004fii.3">
    <molecule id="Q9ULL4-1"/>
    <property type="organism name" value="human"/>
</dbReference>
<dbReference type="AGR" id="HGNC:9105"/>
<dbReference type="CTD" id="5365"/>
<dbReference type="DisGeNET" id="5365"/>
<dbReference type="GeneCards" id="PLXNB3"/>
<dbReference type="HGNC" id="HGNC:9105">
    <property type="gene designation" value="PLXNB3"/>
</dbReference>
<dbReference type="HPA" id="ENSG00000198753">
    <property type="expression patterns" value="Tissue enhanced (brain, intestine)"/>
</dbReference>
<dbReference type="MalaCards" id="PLXNB3"/>
<dbReference type="MIM" id="300214">
    <property type="type" value="gene"/>
</dbReference>
<dbReference type="neXtProt" id="NX_Q9ULL4"/>
<dbReference type="OpenTargets" id="ENSG00000198753"/>
<dbReference type="PharmGKB" id="PA33431"/>
<dbReference type="VEuPathDB" id="HostDB:ENSG00000198753"/>
<dbReference type="eggNOG" id="KOG3610">
    <property type="taxonomic scope" value="Eukaryota"/>
</dbReference>
<dbReference type="GeneTree" id="ENSGT01020000230394"/>
<dbReference type="HOGENOM" id="CLU_001436_1_1_1"/>
<dbReference type="InParanoid" id="Q9ULL4"/>
<dbReference type="OMA" id="YCWLELP"/>
<dbReference type="OrthoDB" id="125363at2759"/>
<dbReference type="PAN-GO" id="Q9ULL4">
    <property type="GO annotations" value="9 GO annotations based on evolutionary models"/>
</dbReference>
<dbReference type="PhylomeDB" id="Q9ULL4"/>
<dbReference type="TreeFam" id="TF312962"/>
<dbReference type="PathwayCommons" id="Q9ULL4"/>
<dbReference type="Reactome" id="R-HSA-416700">
    <property type="pathway name" value="Other semaphorin interactions"/>
</dbReference>
<dbReference type="SignaLink" id="Q9ULL4"/>
<dbReference type="SIGNOR" id="Q9ULL4"/>
<dbReference type="BioGRID-ORCS" id="5365">
    <property type="hits" value="10 hits in 767 CRISPR screens"/>
</dbReference>
<dbReference type="ChiTaRS" id="PLXNB3">
    <property type="organism name" value="human"/>
</dbReference>
<dbReference type="GeneWiki" id="PLXNB3"/>
<dbReference type="GenomeRNAi" id="5365"/>
<dbReference type="Pharos" id="Q9ULL4">
    <property type="development level" value="Tbio"/>
</dbReference>
<dbReference type="PRO" id="PR:Q9ULL4"/>
<dbReference type="Proteomes" id="UP000005640">
    <property type="component" value="Chromosome X"/>
</dbReference>
<dbReference type="RNAct" id="Q9ULL4">
    <property type="molecule type" value="protein"/>
</dbReference>
<dbReference type="Bgee" id="ENSG00000198753">
    <property type="expression patterns" value="Expressed in C1 segment of cervical spinal cord and 94 other cell types or tissues"/>
</dbReference>
<dbReference type="ExpressionAtlas" id="Q9ULL4">
    <property type="expression patterns" value="baseline and differential"/>
</dbReference>
<dbReference type="GO" id="GO:0009986">
    <property type="term" value="C:cell surface"/>
    <property type="evidence" value="ECO:0000314"/>
    <property type="project" value="ParkinsonsUK-UCL"/>
</dbReference>
<dbReference type="GO" id="GO:0005886">
    <property type="term" value="C:plasma membrane"/>
    <property type="evidence" value="ECO:0000318"/>
    <property type="project" value="GO_Central"/>
</dbReference>
<dbReference type="GO" id="GO:0002116">
    <property type="term" value="C:semaphorin receptor complex"/>
    <property type="evidence" value="ECO:0000318"/>
    <property type="project" value="GO_Central"/>
</dbReference>
<dbReference type="GO" id="GO:0098632">
    <property type="term" value="F:cell-cell adhesion mediator activity"/>
    <property type="evidence" value="ECO:0000353"/>
    <property type="project" value="ParkinsonsUK-UCL"/>
</dbReference>
<dbReference type="GO" id="GO:0019904">
    <property type="term" value="F:protein domain specific binding"/>
    <property type="evidence" value="ECO:0000353"/>
    <property type="project" value="UniProtKB"/>
</dbReference>
<dbReference type="GO" id="GO:0051022">
    <property type="term" value="F:Rho GDP-dissociation inhibitor binding"/>
    <property type="evidence" value="ECO:0007669"/>
    <property type="project" value="Ensembl"/>
</dbReference>
<dbReference type="GO" id="GO:0017154">
    <property type="term" value="F:semaphorin receptor activity"/>
    <property type="evidence" value="ECO:0000314"/>
    <property type="project" value="UniProtKB"/>
</dbReference>
<dbReference type="GO" id="GO:0060326">
    <property type="term" value="P:cell chemotaxis"/>
    <property type="evidence" value="ECO:0000314"/>
    <property type="project" value="UniProtKB"/>
</dbReference>
<dbReference type="GO" id="GO:0007156">
    <property type="term" value="P:homophilic cell adhesion via plasma membrane adhesion molecules"/>
    <property type="evidence" value="ECO:0000314"/>
    <property type="project" value="ParkinsonsUK-UCL"/>
</dbReference>
<dbReference type="GO" id="GO:0007162">
    <property type="term" value="P:negative regulation of cell adhesion"/>
    <property type="evidence" value="ECO:0000314"/>
    <property type="project" value="UniProtKB"/>
</dbReference>
<dbReference type="GO" id="GO:0030336">
    <property type="term" value="P:negative regulation of cell migration"/>
    <property type="evidence" value="ECO:0000315"/>
    <property type="project" value="UniProtKB"/>
</dbReference>
<dbReference type="GO" id="GO:0034260">
    <property type="term" value="P:negative regulation of GTPase activity"/>
    <property type="evidence" value="ECO:0000315"/>
    <property type="project" value="UniProtKB"/>
</dbReference>
<dbReference type="GO" id="GO:0010593">
    <property type="term" value="P:negative regulation of lamellipodium assembly"/>
    <property type="evidence" value="ECO:0000250"/>
    <property type="project" value="UniProtKB"/>
</dbReference>
<dbReference type="GO" id="GO:0050918">
    <property type="term" value="P:positive chemotaxis"/>
    <property type="evidence" value="ECO:0000314"/>
    <property type="project" value="UniProtKB"/>
</dbReference>
<dbReference type="GO" id="GO:0050772">
    <property type="term" value="P:positive regulation of axonogenesis"/>
    <property type="evidence" value="ECO:0000318"/>
    <property type="project" value="GO_Central"/>
</dbReference>
<dbReference type="GO" id="GO:0001938">
    <property type="term" value="P:positive regulation of endothelial cell proliferation"/>
    <property type="evidence" value="ECO:0000315"/>
    <property type="project" value="UniProtKB"/>
</dbReference>
<dbReference type="GO" id="GO:0010976">
    <property type="term" value="P:positive regulation of neuron projection development"/>
    <property type="evidence" value="ECO:0000314"/>
    <property type="project" value="ParkinsonsUK-UCL"/>
</dbReference>
<dbReference type="GO" id="GO:0008360">
    <property type="term" value="P:regulation of cell shape"/>
    <property type="evidence" value="ECO:0000318"/>
    <property type="project" value="GO_Central"/>
</dbReference>
<dbReference type="GO" id="GO:0071526">
    <property type="term" value="P:semaphorin-plexin signaling pathway"/>
    <property type="evidence" value="ECO:0000314"/>
    <property type="project" value="UniProtKB"/>
</dbReference>
<dbReference type="GO" id="GO:0007416">
    <property type="term" value="P:synapse assembly"/>
    <property type="evidence" value="ECO:0000318"/>
    <property type="project" value="GO_Central"/>
</dbReference>
<dbReference type="CDD" id="cd01180">
    <property type="entry name" value="IPT_plexin_repeat1"/>
    <property type="match status" value="1"/>
</dbReference>
<dbReference type="CDD" id="cd01179">
    <property type="entry name" value="IPT_plexin_repeat2"/>
    <property type="match status" value="1"/>
</dbReference>
<dbReference type="CDD" id="cd12791">
    <property type="entry name" value="RasGAP_plexin_B3"/>
    <property type="match status" value="1"/>
</dbReference>
<dbReference type="CDD" id="cd11277">
    <property type="entry name" value="Sema_plexin_B3"/>
    <property type="match status" value="1"/>
</dbReference>
<dbReference type="FunFam" id="2.60.40.10:FF:000320">
    <property type="entry name" value="Plexin A1"/>
    <property type="match status" value="1"/>
</dbReference>
<dbReference type="FunFam" id="1.10.506.10:FF:000010">
    <property type="entry name" value="Plexin B1"/>
    <property type="match status" value="1"/>
</dbReference>
<dbReference type="FunFam" id="1.10.506.10:FF:000012">
    <property type="entry name" value="Plexin B1"/>
    <property type="match status" value="1"/>
</dbReference>
<dbReference type="FunFam" id="2.60.40.10:FF:000203">
    <property type="entry name" value="Plexin B2"/>
    <property type="match status" value="1"/>
</dbReference>
<dbReference type="FunFam" id="2.60.40.10:FF:000892">
    <property type="entry name" value="Plexin B3"/>
    <property type="match status" value="1"/>
</dbReference>
<dbReference type="FunFam" id="2.60.40.10:FF:000970">
    <property type="entry name" value="Plexin B3"/>
    <property type="match status" value="1"/>
</dbReference>
<dbReference type="FunFam" id="3.10.20.90:FF:000209">
    <property type="entry name" value="Plexin B3"/>
    <property type="match status" value="1"/>
</dbReference>
<dbReference type="FunFam" id="2.130.10.10:FF:000270">
    <property type="entry name" value="plexin-B3 isoform X3"/>
    <property type="match status" value="1"/>
</dbReference>
<dbReference type="Gene3D" id="1.10.506.10">
    <property type="entry name" value="GTPase Activation - p120gap, domain 1"/>
    <property type="match status" value="2"/>
</dbReference>
<dbReference type="Gene3D" id="2.60.40.10">
    <property type="entry name" value="Immunoglobulins"/>
    <property type="match status" value="4"/>
</dbReference>
<dbReference type="Gene3D" id="3.10.20.90">
    <property type="entry name" value="Phosphatidylinositol 3-kinase Catalytic Subunit, Chain A, domain 1"/>
    <property type="match status" value="1"/>
</dbReference>
<dbReference type="Gene3D" id="2.130.10.10">
    <property type="entry name" value="YVTN repeat-like/Quinoprotein amine dehydrogenase"/>
    <property type="match status" value="1"/>
</dbReference>
<dbReference type="InterPro" id="IPR013783">
    <property type="entry name" value="Ig-like_fold"/>
</dbReference>
<dbReference type="InterPro" id="IPR014756">
    <property type="entry name" value="Ig_E-set"/>
</dbReference>
<dbReference type="InterPro" id="IPR002909">
    <property type="entry name" value="IPT_dom"/>
</dbReference>
<dbReference type="InterPro" id="IPR031148">
    <property type="entry name" value="Plexin"/>
</dbReference>
<dbReference type="InterPro" id="IPR013548">
    <property type="entry name" value="Plexin_cytoplasmic_RasGAP_dom"/>
</dbReference>
<dbReference type="InterPro" id="IPR046800">
    <property type="entry name" value="Plexin_RBD"/>
</dbReference>
<dbReference type="InterPro" id="IPR002165">
    <property type="entry name" value="Plexin_repeat"/>
</dbReference>
<dbReference type="InterPro" id="IPR016201">
    <property type="entry name" value="PSI"/>
</dbReference>
<dbReference type="InterPro" id="IPR008936">
    <property type="entry name" value="Rho_GTPase_activation_prot"/>
</dbReference>
<dbReference type="InterPro" id="IPR001627">
    <property type="entry name" value="Semap_dom"/>
</dbReference>
<dbReference type="InterPro" id="IPR036352">
    <property type="entry name" value="Semap_dom_sf"/>
</dbReference>
<dbReference type="InterPro" id="IPR041019">
    <property type="entry name" value="TIG1_plexin"/>
</dbReference>
<dbReference type="InterPro" id="IPR041362">
    <property type="entry name" value="TIG2_plexin"/>
</dbReference>
<dbReference type="InterPro" id="IPR015943">
    <property type="entry name" value="WD40/YVTN_repeat-like_dom_sf"/>
</dbReference>
<dbReference type="PANTHER" id="PTHR22625">
    <property type="entry name" value="PLEXIN"/>
    <property type="match status" value="1"/>
</dbReference>
<dbReference type="PANTHER" id="PTHR22625:SF33">
    <property type="entry name" value="PLEXIN-B3"/>
    <property type="match status" value="1"/>
</dbReference>
<dbReference type="Pfam" id="PF08337">
    <property type="entry name" value="Plexin_cytopl"/>
    <property type="match status" value="1"/>
</dbReference>
<dbReference type="Pfam" id="PF20170">
    <property type="entry name" value="Plexin_RBD"/>
    <property type="match status" value="1"/>
</dbReference>
<dbReference type="Pfam" id="PF01437">
    <property type="entry name" value="PSI"/>
    <property type="match status" value="1"/>
</dbReference>
<dbReference type="Pfam" id="PF24317">
    <property type="entry name" value="PSI_Plexin-B"/>
    <property type="match status" value="1"/>
</dbReference>
<dbReference type="Pfam" id="PF24479">
    <property type="entry name" value="PSI_PlexinA-B"/>
    <property type="match status" value="1"/>
</dbReference>
<dbReference type="Pfam" id="PF01403">
    <property type="entry name" value="Sema"/>
    <property type="match status" value="1"/>
</dbReference>
<dbReference type="Pfam" id="PF01833">
    <property type="entry name" value="TIG"/>
    <property type="match status" value="3"/>
</dbReference>
<dbReference type="Pfam" id="PF18020">
    <property type="entry name" value="TIG_2"/>
    <property type="match status" value="1"/>
</dbReference>
<dbReference type="Pfam" id="PF17960">
    <property type="entry name" value="TIG_plexin"/>
    <property type="match status" value="1"/>
</dbReference>
<dbReference type="SMART" id="SM00429">
    <property type="entry name" value="IPT"/>
    <property type="match status" value="3"/>
</dbReference>
<dbReference type="SMART" id="SM00423">
    <property type="entry name" value="PSI"/>
    <property type="match status" value="3"/>
</dbReference>
<dbReference type="SMART" id="SM00630">
    <property type="entry name" value="Sema"/>
    <property type="match status" value="1"/>
</dbReference>
<dbReference type="SUPFAM" id="SSF81296">
    <property type="entry name" value="E set domains"/>
    <property type="match status" value="4"/>
</dbReference>
<dbReference type="SUPFAM" id="SSF48350">
    <property type="entry name" value="GTPase activation domain, GAP"/>
    <property type="match status" value="1"/>
</dbReference>
<dbReference type="SUPFAM" id="SSF103575">
    <property type="entry name" value="Plexin repeat"/>
    <property type="match status" value="1"/>
</dbReference>
<dbReference type="SUPFAM" id="SSF101912">
    <property type="entry name" value="Sema domain"/>
    <property type="match status" value="1"/>
</dbReference>
<dbReference type="PROSITE" id="PS51004">
    <property type="entry name" value="SEMA"/>
    <property type="match status" value="1"/>
</dbReference>
<organism>
    <name type="scientific">Homo sapiens</name>
    <name type="common">Human</name>
    <dbReference type="NCBI Taxonomy" id="9606"/>
    <lineage>
        <taxon>Eukaryota</taxon>
        <taxon>Metazoa</taxon>
        <taxon>Chordata</taxon>
        <taxon>Craniata</taxon>
        <taxon>Vertebrata</taxon>
        <taxon>Euteleostomi</taxon>
        <taxon>Mammalia</taxon>
        <taxon>Eutheria</taxon>
        <taxon>Euarchontoglires</taxon>
        <taxon>Primates</taxon>
        <taxon>Haplorrhini</taxon>
        <taxon>Catarrhini</taxon>
        <taxon>Hominidae</taxon>
        <taxon>Homo</taxon>
    </lineage>
</organism>
<keyword id="KW-0025">Alternative splicing</keyword>
<keyword id="KW-1003">Cell membrane</keyword>
<keyword id="KW-1015">Disulfide bond</keyword>
<keyword id="KW-0325">Glycoprotein</keyword>
<keyword id="KW-0472">Membrane</keyword>
<keyword id="KW-0524">Neurogenesis</keyword>
<keyword id="KW-1267">Proteomics identification</keyword>
<keyword id="KW-0675">Receptor</keyword>
<keyword id="KW-1185">Reference proteome</keyword>
<keyword id="KW-0677">Repeat</keyword>
<keyword id="KW-0732">Signal</keyword>
<keyword id="KW-0812">Transmembrane</keyword>
<keyword id="KW-1133">Transmembrane helix</keyword>
<feature type="signal peptide" evidence="2">
    <location>
        <begin position="1"/>
        <end position="44"/>
    </location>
</feature>
<feature type="chain" id="PRO_0000024674" description="Plexin-B3">
    <location>
        <begin position="45"/>
        <end position="1909"/>
    </location>
</feature>
<feature type="topological domain" description="Extracellular" evidence="2">
    <location>
        <begin position="45"/>
        <end position="1255"/>
    </location>
</feature>
<feature type="transmembrane region" description="Helical" evidence="2">
    <location>
        <begin position="1256"/>
        <end position="1276"/>
    </location>
</feature>
<feature type="topological domain" description="Cytoplasmic" evidence="2">
    <location>
        <begin position="1277"/>
        <end position="1909"/>
    </location>
</feature>
<feature type="domain" description="Sema" evidence="3">
    <location>
        <begin position="45"/>
        <end position="471"/>
    </location>
</feature>
<feature type="domain" description="PSI 1">
    <location>
        <begin position="473"/>
        <end position="526"/>
    </location>
</feature>
<feature type="domain" description="PSI 2">
    <location>
        <begin position="620"/>
        <end position="682"/>
    </location>
</feature>
<feature type="domain" description="PSI 3">
    <location>
        <begin position="787"/>
        <end position="833"/>
    </location>
</feature>
<feature type="domain" description="IPT/TIG 1">
    <location>
        <begin position="835"/>
        <end position="925"/>
    </location>
</feature>
<feature type="domain" description="IPT/TIG 2">
    <location>
        <begin position="927"/>
        <end position="1012"/>
    </location>
</feature>
<feature type="domain" description="IPT/TIG 3">
    <location>
        <begin position="1015"/>
        <end position="1145"/>
    </location>
</feature>
<feature type="domain" description="IPT/TIG 4">
    <location>
        <begin position="1159"/>
        <end position="1244"/>
    </location>
</feature>
<feature type="glycosylation site" description="N-linked (GlcNAc...) asparagine" evidence="2">
    <location>
        <position position="51"/>
    </location>
</feature>
<feature type="glycosylation site" description="N-linked (GlcNAc...) asparagine" evidence="2">
    <location>
        <position position="231"/>
    </location>
</feature>
<feature type="glycosylation site" description="N-linked (GlcNAc...) asparagine" evidence="2">
    <location>
        <position position="615"/>
    </location>
</feature>
<feature type="glycosylation site" description="N-linked (GlcNAc...) asparagine" evidence="2">
    <location>
        <position position="802"/>
    </location>
</feature>
<feature type="glycosylation site" description="N-linked (GlcNAc...) asparagine" evidence="2">
    <location>
        <position position="900"/>
    </location>
</feature>
<feature type="glycosylation site" description="N-linked (GlcNAc...) asparagine" evidence="2">
    <location>
        <position position="957"/>
    </location>
</feature>
<feature type="glycosylation site" description="N-linked (GlcNAc...) asparagine" evidence="2">
    <location>
        <position position="1101"/>
    </location>
</feature>
<feature type="glycosylation site" description="N-linked (GlcNAc...) asparagine" evidence="2">
    <location>
        <position position="1218"/>
    </location>
</feature>
<feature type="disulfide bond" evidence="3">
    <location>
        <begin position="98"/>
        <end position="107"/>
    </location>
</feature>
<feature type="disulfide bond" evidence="3">
    <location>
        <begin position="132"/>
        <end position="140"/>
    </location>
</feature>
<feature type="disulfide bond" evidence="3">
    <location>
        <begin position="267"/>
        <end position="370"/>
    </location>
</feature>
<feature type="disulfide bond" evidence="3">
    <location>
        <begin position="283"/>
        <end position="315"/>
    </location>
</feature>
<feature type="disulfide bond" evidence="3">
    <location>
        <begin position="333"/>
        <end position="357"/>
    </location>
</feature>
<feature type="disulfide bond" evidence="3">
    <location>
        <begin position="474"/>
        <end position="491"/>
    </location>
</feature>
<feature type="disulfide bond" evidence="3">
    <location>
        <begin position="480"/>
        <end position="525"/>
    </location>
</feature>
<feature type="disulfide bond" evidence="3">
    <location>
        <begin position="483"/>
        <end position="500"/>
    </location>
</feature>
<feature type="disulfide bond" evidence="3">
    <location>
        <begin position="494"/>
        <end position="506"/>
    </location>
</feature>
<feature type="disulfide bond" evidence="3">
    <location>
        <begin position="562"/>
        <end position="580"/>
    </location>
</feature>
<feature type="splice variant" id="VSP_044467" description="In isoform 2." evidence="11">
    <original>MCHAAQETPLLHHFM</original>
    <variation>MELTPASSLTCSLLSPRLPGSFPQLRRVPPCSRPWLPK</variation>
    <location>
        <begin position="1"/>
        <end position="15"/>
    </location>
</feature>
<feature type="sequence variant" id="VAR_050601" description="In dbSNP:rs34360382.">
    <original>A</original>
    <variation>T</variation>
    <location>
        <position position="126"/>
    </location>
</feature>
<feature type="sequence variant" id="VAR_079495" description="In dbSNP:rs782213788." evidence="10">
    <original>R</original>
    <variation>Q</variation>
    <location>
        <position position="550"/>
    </location>
</feature>
<feature type="sequence variant" id="VAR_019681" description="In dbSNP:rs2266879." evidence="4">
    <original>V</original>
    <variation>I</variation>
    <location>
        <position position="598"/>
    </location>
</feature>
<feature type="sequence variant" id="VAR_061538" description="In dbSNP:rs6643791." evidence="4">
    <original>E</original>
    <variation>D</variation>
    <location>
        <position position="1156"/>
    </location>
</feature>
<feature type="sequence variant" id="VAR_019682" description="In dbSNP:rs5987155." evidence="4">
    <original>M</original>
    <variation>T</variation>
    <location>
        <position position="1535"/>
    </location>
</feature>
<feature type="sequence variant" id="VAR_068807" description="In dbSNP:rs34762690.">
    <original>E</original>
    <variation>A</variation>
    <location>
        <position position="1651"/>
    </location>
</feature>
<feature type="sequence conflict" description="In Ref. 3; BAH12182." evidence="12" ref="3">
    <original>A</original>
    <variation>V</variation>
    <location>
        <position position="149"/>
    </location>
</feature>
<feature type="sequence conflict" description="In Ref. 3; BAH12182." evidence="12" ref="3">
    <original>L</original>
    <variation>P</variation>
    <location>
        <position position="300"/>
    </location>
</feature>
<name>PLXB3_HUMAN</name>
<accession>Q9ULL4</accession>
<accession>B7Z3E6</accession>
<accession>F5H773</accession>
<accession>Q9HDA4</accession>
<evidence type="ECO:0000250" key="1"/>
<evidence type="ECO:0000255" key="2"/>
<evidence type="ECO:0000255" key="3">
    <source>
        <dbReference type="PROSITE-ProRule" id="PRU00352"/>
    </source>
</evidence>
<evidence type="ECO:0000269" key="4">
    <source>
    </source>
</evidence>
<evidence type="ECO:0000269" key="5">
    <source>
    </source>
</evidence>
<evidence type="ECO:0000269" key="6">
    <source>
    </source>
</evidence>
<evidence type="ECO:0000269" key="7">
    <source>
    </source>
</evidence>
<evidence type="ECO:0000269" key="8">
    <source>
    </source>
</evidence>
<evidence type="ECO:0000269" key="9">
    <source>
    </source>
</evidence>
<evidence type="ECO:0000269" key="10">
    <source>
    </source>
</evidence>
<evidence type="ECO:0000303" key="11">
    <source>
    </source>
</evidence>
<evidence type="ECO:0000305" key="12"/>